<name>YTP1_YEAST</name>
<dbReference type="EMBL" id="U22109">
    <property type="protein sequence ID" value="AAB06186.1"/>
    <property type="molecule type" value="Genomic_DNA"/>
</dbReference>
<dbReference type="EMBL" id="Z71513">
    <property type="protein sequence ID" value="CAA96142.1"/>
    <property type="molecule type" value="Genomic_DNA"/>
</dbReference>
<dbReference type="EMBL" id="Z69381">
    <property type="protein sequence ID" value="CAA93361.1"/>
    <property type="molecule type" value="Genomic_DNA"/>
</dbReference>
<dbReference type="EMBL" id="BK006947">
    <property type="protein sequence ID" value="DAA10322.1"/>
    <property type="molecule type" value="Genomic_DNA"/>
</dbReference>
<dbReference type="PIR" id="S59812">
    <property type="entry name" value="S59812"/>
</dbReference>
<dbReference type="RefSeq" id="NP_014162.1">
    <property type="nucleotide sequence ID" value="NM_001183075.1"/>
</dbReference>
<dbReference type="BioGRID" id="35602">
    <property type="interactions" value="34"/>
</dbReference>
<dbReference type="DIP" id="DIP-4563N"/>
<dbReference type="FunCoup" id="P53584">
    <property type="interactions" value="54"/>
</dbReference>
<dbReference type="IntAct" id="P53584">
    <property type="interactions" value="2"/>
</dbReference>
<dbReference type="STRING" id="4932.YNL237W"/>
<dbReference type="MoonDB" id="P53584">
    <property type="type" value="Predicted"/>
</dbReference>
<dbReference type="TCDB" id="9.B.57.1.2">
    <property type="family name" value="the conidiation and conidial germination protein (ccgp) family"/>
</dbReference>
<dbReference type="iPTMnet" id="P53584"/>
<dbReference type="PaxDb" id="4932-YNL237W"/>
<dbReference type="PeptideAtlas" id="P53584"/>
<dbReference type="EnsemblFungi" id="YNL237W_mRNA">
    <property type="protein sequence ID" value="YNL237W"/>
    <property type="gene ID" value="YNL237W"/>
</dbReference>
<dbReference type="GeneID" id="855484"/>
<dbReference type="KEGG" id="sce:YNL237W"/>
<dbReference type="AGR" id="SGD:S000005181"/>
<dbReference type="SGD" id="S000005181">
    <property type="gene designation" value="YTP1"/>
</dbReference>
<dbReference type="VEuPathDB" id="FungiDB:YNL237W"/>
<dbReference type="eggNOG" id="ENOG502QRB1">
    <property type="taxonomic scope" value="Eukaryota"/>
</dbReference>
<dbReference type="GeneTree" id="ENSGT00940000176688"/>
<dbReference type="HOGENOM" id="CLU_034579_1_0_1"/>
<dbReference type="InParanoid" id="P53584"/>
<dbReference type="OMA" id="DYQHTAM"/>
<dbReference type="OrthoDB" id="4137487at2759"/>
<dbReference type="BioCyc" id="YEAST:G3O-33236-MONOMER"/>
<dbReference type="BioGRID-ORCS" id="855484">
    <property type="hits" value="2 hits in 10 CRISPR screens"/>
</dbReference>
<dbReference type="PRO" id="PR:P53584"/>
<dbReference type="Proteomes" id="UP000002311">
    <property type="component" value="Chromosome XIV"/>
</dbReference>
<dbReference type="RNAct" id="P53584">
    <property type="molecule type" value="protein"/>
</dbReference>
<dbReference type="GO" id="GO:0016020">
    <property type="term" value="C:membrane"/>
    <property type="evidence" value="ECO:0000255"/>
    <property type="project" value="SGD"/>
</dbReference>
<dbReference type="InterPro" id="IPR018827">
    <property type="entry name" value="YTP1_C"/>
</dbReference>
<dbReference type="PANTHER" id="PTHR31685">
    <property type="entry name" value="INTEGRAL MEMBRANE PROTEIN (AFU_ORTHOLOGUE AFUA_6G12730)-RELATED"/>
    <property type="match status" value="1"/>
</dbReference>
<dbReference type="PANTHER" id="PTHR31685:SF2">
    <property type="entry name" value="PROTEIN YTP1"/>
    <property type="match status" value="1"/>
</dbReference>
<dbReference type="Pfam" id="PF10355">
    <property type="entry name" value="Ytp1"/>
    <property type="match status" value="1"/>
</dbReference>
<protein>
    <recommendedName>
        <fullName>Protein YTP1</fullName>
    </recommendedName>
</protein>
<evidence type="ECO:0000255" key="1"/>
<feature type="chain" id="PRO_0000066529" description="Protein YTP1">
    <location>
        <begin position="1"/>
        <end position="459"/>
    </location>
</feature>
<feature type="topological domain" description="Extracellular" evidence="1">
    <location>
        <begin position="1"/>
        <end position="6"/>
    </location>
</feature>
<feature type="transmembrane region" description="Helical" evidence="1">
    <location>
        <begin position="7"/>
        <end position="27"/>
    </location>
</feature>
<feature type="topological domain" description="Cytoplasmic" evidence="1">
    <location>
        <begin position="28"/>
        <end position="59"/>
    </location>
</feature>
<feature type="transmembrane region" description="Helical" evidence="1">
    <location>
        <begin position="60"/>
        <end position="80"/>
    </location>
</feature>
<feature type="topological domain" description="Extracellular" evidence="1">
    <location>
        <begin position="81"/>
        <end position="82"/>
    </location>
</feature>
<feature type="transmembrane region" description="Helical" evidence="1">
    <location>
        <begin position="83"/>
        <end position="103"/>
    </location>
</feature>
<feature type="topological domain" description="Cytoplasmic" evidence="1">
    <location>
        <begin position="104"/>
        <end position="122"/>
    </location>
</feature>
<feature type="transmembrane region" description="Helical" evidence="1">
    <location>
        <begin position="123"/>
        <end position="143"/>
    </location>
</feature>
<feature type="topological domain" description="Extracellular" evidence="1">
    <location>
        <begin position="144"/>
        <end position="170"/>
    </location>
</feature>
<feature type="transmembrane region" description="Helical" evidence="1">
    <location>
        <begin position="171"/>
        <end position="191"/>
    </location>
</feature>
<feature type="topological domain" description="Cytoplasmic" evidence="1">
    <location>
        <begin position="192"/>
        <end position="205"/>
    </location>
</feature>
<feature type="transmembrane region" description="Helical" evidence="1">
    <location>
        <begin position="206"/>
        <end position="226"/>
    </location>
</feature>
<feature type="topological domain" description="Extracellular" evidence="1">
    <location>
        <begin position="227"/>
        <end position="266"/>
    </location>
</feature>
<feature type="transmembrane region" description="Helical" evidence="1">
    <location>
        <begin position="267"/>
        <end position="287"/>
    </location>
</feature>
<feature type="topological domain" description="Cytoplasmic" evidence="1">
    <location>
        <begin position="288"/>
        <end position="295"/>
    </location>
</feature>
<feature type="transmembrane region" description="Helical" evidence="1">
    <location>
        <begin position="296"/>
        <end position="316"/>
    </location>
</feature>
<feature type="topological domain" description="Extracellular" evidence="1">
    <location>
        <begin position="317"/>
        <end position="322"/>
    </location>
</feature>
<feature type="transmembrane region" description="Helical" evidence="1">
    <location>
        <begin position="323"/>
        <end position="343"/>
    </location>
</feature>
<feature type="topological domain" description="Cytoplasmic" evidence="1">
    <location>
        <begin position="344"/>
        <end position="351"/>
    </location>
</feature>
<feature type="transmembrane region" description="Helical" evidence="1">
    <location>
        <begin position="352"/>
        <end position="372"/>
    </location>
</feature>
<feature type="topological domain" description="Extracellular" evidence="1">
    <location>
        <begin position="373"/>
        <end position="389"/>
    </location>
</feature>
<feature type="transmembrane region" description="Helical" evidence="1">
    <location>
        <begin position="390"/>
        <end position="410"/>
    </location>
</feature>
<feature type="topological domain" description="Cytoplasmic" evidence="1">
    <location>
        <begin position="411"/>
        <end position="459"/>
    </location>
</feature>
<accession>P53584</accession>
<accession>D6W0V6</accession>
<keyword id="KW-0472">Membrane</keyword>
<keyword id="KW-1185">Reference proteome</keyword>
<keyword id="KW-0812">Transmembrane</keyword>
<keyword id="KW-1133">Transmembrane helix</keyword>
<gene>
    <name type="primary">YTP1</name>
    <name type="ordered locus">YNL237W</name>
    <name type="ORF">N1129</name>
</gene>
<proteinExistence type="evidence at protein level"/>
<organism>
    <name type="scientific">Saccharomyces cerevisiae (strain ATCC 204508 / S288c)</name>
    <name type="common">Baker's yeast</name>
    <dbReference type="NCBI Taxonomy" id="559292"/>
    <lineage>
        <taxon>Eukaryota</taxon>
        <taxon>Fungi</taxon>
        <taxon>Dikarya</taxon>
        <taxon>Ascomycota</taxon>
        <taxon>Saccharomycotina</taxon>
        <taxon>Saccharomycetes</taxon>
        <taxon>Saccharomycetales</taxon>
        <taxon>Saccharomycetaceae</taxon>
        <taxon>Saccharomyces</taxon>
    </lineage>
</organism>
<reference key="1">
    <citation type="submission" date="1995-03" db="EMBL/GenBank/DDBJ databases">
        <authorList>
            <person name="West R.W. Jr."/>
            <person name="Ma J.L."/>
            <person name="Thomas S."/>
        </authorList>
    </citation>
    <scope>NUCLEOTIDE SEQUENCE [GENOMIC DNA]</scope>
    <source>
        <strain>YM256</strain>
    </source>
</reference>
<reference key="2">
    <citation type="journal article" date="1996" name="Yeast">
        <title>The DNA sequence of cosmid 14-5 from chromosome XIV reveals 21 open reading frames including a novel gene encoding a globin-like domain.</title>
        <authorList>
            <person name="Pandolfo D."/>
            <person name="de Antoni A."/>
            <person name="Lanfranchi G."/>
            <person name="Valle G."/>
        </authorList>
    </citation>
    <scope>NUCLEOTIDE SEQUENCE [GENOMIC DNA]</scope>
</reference>
<reference key="3">
    <citation type="journal article" date="1997" name="Nature">
        <title>The nucleotide sequence of Saccharomyces cerevisiae chromosome XIV and its evolutionary implications.</title>
        <authorList>
            <person name="Philippsen P."/>
            <person name="Kleine K."/>
            <person name="Poehlmann R."/>
            <person name="Duesterhoeft A."/>
            <person name="Hamberg K."/>
            <person name="Hegemann J.H."/>
            <person name="Obermaier B."/>
            <person name="Urrestarazu L.A."/>
            <person name="Aert R."/>
            <person name="Albermann K."/>
            <person name="Altmann R."/>
            <person name="Andre B."/>
            <person name="Baladron V."/>
            <person name="Ballesta J.P.G."/>
            <person name="Becam A.-M."/>
            <person name="Beinhauer J.D."/>
            <person name="Boskovic J."/>
            <person name="Buitrago M.J."/>
            <person name="Bussereau F."/>
            <person name="Coster F."/>
            <person name="Crouzet M."/>
            <person name="D'Angelo M."/>
            <person name="Dal Pero F."/>
            <person name="De Antoni A."/>
            <person name="del Rey F."/>
            <person name="Doignon F."/>
            <person name="Domdey H."/>
            <person name="Dubois E."/>
            <person name="Fiedler T.A."/>
            <person name="Fleig U."/>
            <person name="Floeth M."/>
            <person name="Fritz C."/>
            <person name="Gaillardin C."/>
            <person name="Garcia-Cantalejo J.M."/>
            <person name="Glansdorff N."/>
            <person name="Goffeau A."/>
            <person name="Gueldener U."/>
            <person name="Herbert C.J."/>
            <person name="Heumann K."/>
            <person name="Heuss-Neitzel D."/>
            <person name="Hilbert H."/>
            <person name="Hinni K."/>
            <person name="Iraqui Houssaini I."/>
            <person name="Jacquet M."/>
            <person name="Jimenez A."/>
            <person name="Jonniaux J.-L."/>
            <person name="Karpfinger-Hartl L."/>
            <person name="Lanfranchi G."/>
            <person name="Lepingle A."/>
            <person name="Levesque H."/>
            <person name="Lyck R."/>
            <person name="Maftahi M."/>
            <person name="Mallet L."/>
            <person name="Maurer C.T.C."/>
            <person name="Messenguy F."/>
            <person name="Mewes H.-W."/>
            <person name="Moestl D."/>
            <person name="Nasr F."/>
            <person name="Nicaud J.-M."/>
            <person name="Niedenthal R.K."/>
            <person name="Pandolfo D."/>
            <person name="Pierard A."/>
            <person name="Piravandi E."/>
            <person name="Planta R.J."/>
            <person name="Pohl T.M."/>
            <person name="Purnelle B."/>
            <person name="Rebischung C."/>
            <person name="Remacha M.A."/>
            <person name="Revuelta J.L."/>
            <person name="Rinke M."/>
            <person name="Saiz J.E."/>
            <person name="Sartorello F."/>
            <person name="Scherens B."/>
            <person name="Sen-Gupta M."/>
            <person name="Soler-Mira A."/>
            <person name="Urbanus J.H.M."/>
            <person name="Valle G."/>
            <person name="Van Dyck L."/>
            <person name="Verhasselt P."/>
            <person name="Vierendeels F."/>
            <person name="Vissers S."/>
            <person name="Voet M."/>
            <person name="Volckaert G."/>
            <person name="Wach A."/>
            <person name="Wambutt R."/>
            <person name="Wedler H."/>
            <person name="Zollner A."/>
            <person name="Hani J."/>
        </authorList>
    </citation>
    <scope>NUCLEOTIDE SEQUENCE [LARGE SCALE GENOMIC DNA]</scope>
    <source>
        <strain>ATCC 204508 / S288c</strain>
    </source>
</reference>
<reference key="4">
    <citation type="journal article" date="2014" name="G3 (Bethesda)">
        <title>The reference genome sequence of Saccharomyces cerevisiae: Then and now.</title>
        <authorList>
            <person name="Engel S.R."/>
            <person name="Dietrich F.S."/>
            <person name="Fisk D.G."/>
            <person name="Binkley G."/>
            <person name="Balakrishnan R."/>
            <person name="Costanzo M.C."/>
            <person name="Dwight S.S."/>
            <person name="Hitz B.C."/>
            <person name="Karra K."/>
            <person name="Nash R.S."/>
            <person name="Weng S."/>
            <person name="Wong E.D."/>
            <person name="Lloyd P."/>
            <person name="Skrzypek M.S."/>
            <person name="Miyasato S.R."/>
            <person name="Simison M."/>
            <person name="Cherry J.M."/>
        </authorList>
    </citation>
    <scope>GENOME REANNOTATION</scope>
    <source>
        <strain>ATCC 204508 / S288c</strain>
    </source>
</reference>
<reference key="5">
    <citation type="journal article" date="2006" name="Proc. Natl. Acad. Sci. U.S.A.">
        <title>A global topology map of the Saccharomyces cerevisiae membrane proteome.</title>
        <authorList>
            <person name="Kim H."/>
            <person name="Melen K."/>
            <person name="Oesterberg M."/>
            <person name="von Heijne G."/>
        </authorList>
    </citation>
    <scope>TOPOLOGY [LARGE SCALE ANALYSIS]</scope>
    <source>
        <strain>ATCC 208353 / W303-1A</strain>
    </source>
</reference>
<comment type="subcellular location">
    <subcellularLocation>
        <location>Membrane</location>
        <topology>Multi-pass membrane protein</topology>
    </subcellularLocation>
</comment>
<sequence>MTAANKNIVFGFSRSISAILLICFFFEKVCGDMEHDMGMDDTSGYTRPEIVQAGSKSFHWLCTLGFLLLLPSVVTCLSFAGRIYSATLLQCTCAVYAFLEAAVLRFQDNDGVENRTSRGTAWFLVGLTWITLFFGGLAGGTGFLVKSKRLQTFISNAGEKRLSYIHRGLSFLTVLTGWVKVCLAPVALFGFCREAHTGQCIAHGIMGSAFVLYGFIYVLVLVIPWIRSAQTSYSQDYVDSWVMCIWGVVNTFTEHRWGREGWSVHDYQHTFMGIIWWTGGILGIFLSRNGRRTFVPSLIIIFTGWAMSEHAQHLIISTKVHNMFGLVLMCGGALRIIEISFLLRDKRTLDKIHSFQYLAPFCLVCSGLLFMGANEEQLILVLRLGGDHSAYVLIIVSGAFLVYFWMIACLEFYLYLLEKGKQGFLPKSYELEEENNNVSFELDNISNEDVDEDTTPFNV</sequence>